<keyword id="KW-0002">3D-structure</keyword>
<keyword id="KW-0058">Aromatic hydrocarbons catabolism</keyword>
<keyword id="KW-0223">Dioxygenase</keyword>
<keyword id="KW-0903">Direct protein sequencing</keyword>
<keyword id="KW-0408">Iron</keyword>
<keyword id="KW-0479">Metal-binding</keyword>
<keyword id="KW-0560">Oxidoreductase</keyword>
<sequence length="241" mass="27548">MSQIIWGAYAQRNTEDHPPAYAPGYKTSVLRSPKNALISIAETLSEVTAPHFSADKFGPKDNDLILNYAKDGLPIGERVIVHGYVRDQFGRPVKNALVEVWQANASGRYRHPNDQYIGAMDPNFGGCGRMLTDDNGYYVFRTIKPGPYPWRNRINEWRPAHIHFSLIADGWAQRLISQFYFEGDTLIDSCPILKTIPSEQQRRALIALEDKSNFIEADSRCYRFDITLRGRRATYFENDLT</sequence>
<gene>
    <name type="primary">pcaH</name>
    <name type="ordered locus">ACIAD1711</name>
</gene>
<feature type="chain" id="PRO_0000085097" description="Protocatechuate 3,4-dioxygenase beta chain">
    <location>
        <begin position="1"/>
        <end position="241"/>
    </location>
</feature>
<feature type="binding site" evidence="1">
    <location>
        <position position="109"/>
    </location>
    <ligand>
        <name>Fe cation</name>
        <dbReference type="ChEBI" id="CHEBI:24875"/>
        <note>catalytic</note>
    </ligand>
</feature>
<feature type="binding site" evidence="1">
    <location>
        <position position="148"/>
    </location>
    <ligand>
        <name>Fe cation</name>
        <dbReference type="ChEBI" id="CHEBI:24875"/>
        <note>catalytic</note>
    </ligand>
</feature>
<feature type="binding site" evidence="1">
    <location>
        <position position="161"/>
    </location>
    <ligand>
        <name>Fe cation</name>
        <dbReference type="ChEBI" id="CHEBI:24875"/>
        <note>catalytic</note>
    </ligand>
</feature>
<feature type="binding site" evidence="1">
    <location>
        <position position="163"/>
    </location>
    <ligand>
        <name>Fe cation</name>
        <dbReference type="ChEBI" id="CHEBI:24875"/>
        <note>catalytic</note>
    </ligand>
</feature>
<feature type="strand" evidence="3">
    <location>
        <begin position="5"/>
        <end position="9"/>
    </location>
</feature>
<feature type="helix" evidence="3">
    <location>
        <begin position="14"/>
        <end position="16"/>
    </location>
</feature>
<feature type="helix" evidence="3">
    <location>
        <begin position="26"/>
        <end position="29"/>
    </location>
</feature>
<feature type="strand" evidence="3">
    <location>
        <begin position="30"/>
        <end position="32"/>
    </location>
</feature>
<feature type="helix" evidence="3">
    <location>
        <begin position="44"/>
        <end position="47"/>
    </location>
</feature>
<feature type="helix" evidence="3">
    <location>
        <begin position="54"/>
        <end position="56"/>
    </location>
</feature>
<feature type="turn" evidence="3">
    <location>
        <begin position="59"/>
        <end position="62"/>
    </location>
</feature>
<feature type="turn" evidence="3">
    <location>
        <begin position="64"/>
        <end position="68"/>
    </location>
</feature>
<feature type="strand" evidence="3">
    <location>
        <begin position="70"/>
        <end position="72"/>
    </location>
</feature>
<feature type="strand" evidence="3">
    <location>
        <begin position="78"/>
        <end position="87"/>
    </location>
</feature>
<feature type="strand" evidence="3">
    <location>
        <begin position="97"/>
        <end position="101"/>
    </location>
</feature>
<feature type="strand" evidence="3">
    <location>
        <begin position="127"/>
        <end position="131"/>
    </location>
</feature>
<feature type="strand" evidence="3">
    <location>
        <begin position="136"/>
        <end position="143"/>
    </location>
</feature>
<feature type="strand" evidence="3">
    <location>
        <begin position="148"/>
        <end position="153"/>
    </location>
</feature>
<feature type="strand" evidence="3">
    <location>
        <begin position="156"/>
        <end position="158"/>
    </location>
</feature>
<feature type="strand" evidence="3">
    <location>
        <begin position="160"/>
        <end position="167"/>
    </location>
</feature>
<feature type="helix" evidence="3">
    <location>
        <begin position="171"/>
        <end position="173"/>
    </location>
</feature>
<feature type="strand" evidence="3">
    <location>
        <begin position="175"/>
        <end position="181"/>
    </location>
</feature>
<feature type="helix" evidence="3">
    <location>
        <begin position="185"/>
        <end position="189"/>
    </location>
</feature>
<feature type="helix" evidence="3">
    <location>
        <begin position="193"/>
        <end position="195"/>
    </location>
</feature>
<feature type="helix" evidence="3">
    <location>
        <begin position="199"/>
        <end position="203"/>
    </location>
</feature>
<feature type="strand" evidence="3">
    <location>
        <begin position="206"/>
        <end position="209"/>
    </location>
</feature>
<feature type="helix" evidence="3">
    <location>
        <begin position="211"/>
        <end position="213"/>
    </location>
</feature>
<feature type="turn" evidence="3">
    <location>
        <begin position="216"/>
        <end position="218"/>
    </location>
</feature>
<feature type="strand" evidence="3">
    <location>
        <begin position="219"/>
        <end position="223"/>
    </location>
</feature>
<feature type="strand" evidence="3">
    <location>
        <begin position="226"/>
        <end position="228"/>
    </location>
</feature>
<feature type="strand" evidence="3">
    <location>
        <begin position="231"/>
        <end position="236"/>
    </location>
</feature>
<reference key="1">
    <citation type="journal article" date="1990" name="J. Bacteriol.">
        <title>DNA sequences of genes encoding Acinetobacter calcoaceticus protocatechuate 3,4-dioxygenase: evidence indicating shuffling of genes and of DNA sequences within genes during their evolutionary divergence.</title>
        <authorList>
            <person name="Hartnett C."/>
            <person name="Neidle E.L."/>
            <person name="Ngai K.-L."/>
            <person name="Ornston L.N."/>
        </authorList>
    </citation>
    <scope>NUCLEOTIDE SEQUENCE [GENOMIC DNA]</scope>
    <scope>PROTEIN SEQUENCE OF 1-10</scope>
</reference>
<reference key="2">
    <citation type="journal article" date="1994" name="Gene">
        <title>Contrasting patterns of evolutionary divergence within the Acinetobacter calcoaceticus pca operon.</title>
        <authorList>
            <person name="Kowalchuk G.A."/>
            <person name="Hartnett G.B."/>
            <person name="Benson A."/>
            <person name="Houghton J.E."/>
            <person name="Ngai K.-L."/>
            <person name="Ornston L.N."/>
        </authorList>
    </citation>
    <scope>SEQUENCE REVISION TO 12; 22; 36 AND 232-241</scope>
</reference>
<reference key="3">
    <citation type="journal article" date="2004" name="Nucleic Acids Res.">
        <title>Unique features revealed by the genome sequence of Acinetobacter sp. ADP1, a versatile and naturally transformation competent bacterium.</title>
        <authorList>
            <person name="Barbe V."/>
            <person name="Vallenet D."/>
            <person name="Fonknechten N."/>
            <person name="Kreimeyer A."/>
            <person name="Oztas S."/>
            <person name="Labarre L."/>
            <person name="Cruveiller S."/>
            <person name="Robert C."/>
            <person name="Duprat S."/>
            <person name="Wincker P."/>
            <person name="Ornston L.N."/>
            <person name="Weissenbach J."/>
            <person name="Marliere P."/>
            <person name="Cohen G.N."/>
            <person name="Medigue C."/>
        </authorList>
    </citation>
    <scope>NUCLEOTIDE SEQUENCE [LARGE SCALE GENOMIC DNA]</scope>
    <source>
        <strain>ATCC 33305 / BD413 / ADP1</strain>
    </source>
</reference>
<comment type="function">
    <text>Plays an essential role in the utilization of numerous aromatic and hydroaromatic compounds via the beta-ketoadipate pathway.</text>
</comment>
<comment type="catalytic activity">
    <reaction>
        <text>3,4-dihydroxybenzoate + O2 = 3-carboxy-cis,cis-muconate + 2 H(+)</text>
        <dbReference type="Rhea" id="RHEA:10084"/>
        <dbReference type="ChEBI" id="CHEBI:15378"/>
        <dbReference type="ChEBI" id="CHEBI:15379"/>
        <dbReference type="ChEBI" id="CHEBI:36241"/>
        <dbReference type="ChEBI" id="CHEBI:57496"/>
        <dbReference type="EC" id="1.13.11.3"/>
    </reaction>
</comment>
<comment type="cofactor">
    <cofactor>
        <name>Fe(3+)</name>
        <dbReference type="ChEBI" id="CHEBI:29034"/>
    </cofactor>
    <text>Binds Fe(3+) ion per subunit.</text>
</comment>
<comment type="pathway">
    <text>Aromatic compound metabolism; beta-ketoadipate pathway; 3-carboxy-cis,cis-muconate from 3,4-dihydroxybenzoate: step 1/1.</text>
</comment>
<comment type="subunit">
    <text>The enzyme is an oligomer of 12 copies of the alpha and beta chains.</text>
</comment>
<comment type="interaction">
    <interactant intactId="EBI-1029420">
        <id>P20372</id>
    </interactant>
    <interactant intactId="EBI-1029428">
        <id>P20371</id>
        <label>pcaG</label>
    </interactant>
    <organismsDiffer>false</organismsDiffer>
    <experiments>5</experiments>
</comment>
<comment type="similarity">
    <text evidence="2">Belongs to the intradiol ring-cleavage dioxygenase family.</text>
</comment>
<name>PCXB_ACIAD</name>
<dbReference type="EC" id="1.13.11.3"/>
<dbReference type="EMBL" id="L05770">
    <property type="protein sequence ID" value="AAC37153.1"/>
    <property type="molecule type" value="Genomic_DNA"/>
</dbReference>
<dbReference type="EMBL" id="CR543861">
    <property type="protein sequence ID" value="CAG68553.1"/>
    <property type="molecule type" value="Genomic_DNA"/>
</dbReference>
<dbReference type="PIR" id="C35119">
    <property type="entry name" value="C35119"/>
</dbReference>
<dbReference type="RefSeq" id="WP_004926639.1">
    <property type="nucleotide sequence ID" value="NC_005966.1"/>
</dbReference>
<dbReference type="PDB" id="1EO2">
    <property type="method" value="X-ray"/>
    <property type="resolution" value="2.25 A"/>
    <property type="chains" value="B=1-241"/>
</dbReference>
<dbReference type="PDB" id="1EO9">
    <property type="method" value="X-ray"/>
    <property type="resolution" value="2.00 A"/>
    <property type="chains" value="B=1-241"/>
</dbReference>
<dbReference type="PDB" id="1EOA">
    <property type="method" value="X-ray"/>
    <property type="resolution" value="2.15 A"/>
    <property type="chains" value="B=1-241"/>
</dbReference>
<dbReference type="PDB" id="1EOB">
    <property type="method" value="X-ray"/>
    <property type="resolution" value="2.20 A"/>
    <property type="chains" value="B=1-241"/>
</dbReference>
<dbReference type="PDB" id="1EOC">
    <property type="method" value="X-ray"/>
    <property type="resolution" value="2.25 A"/>
    <property type="chains" value="B=1-241"/>
</dbReference>
<dbReference type="PDB" id="2BUM">
    <property type="method" value="X-ray"/>
    <property type="resolution" value="1.80 A"/>
    <property type="chains" value="B=1-241"/>
</dbReference>
<dbReference type="PDB" id="2BUQ">
    <property type="method" value="X-ray"/>
    <property type="resolution" value="1.80 A"/>
    <property type="chains" value="B=1-241"/>
</dbReference>
<dbReference type="PDB" id="2BUR">
    <property type="method" value="X-ray"/>
    <property type="resolution" value="1.80 A"/>
    <property type="chains" value="B=1-241"/>
</dbReference>
<dbReference type="PDB" id="2BUT">
    <property type="method" value="X-ray"/>
    <property type="resolution" value="1.85 A"/>
    <property type="chains" value="B=1-241"/>
</dbReference>
<dbReference type="PDB" id="2BUU">
    <property type="method" value="X-ray"/>
    <property type="resolution" value="1.80 A"/>
    <property type="chains" value="B=1-241"/>
</dbReference>
<dbReference type="PDB" id="2BUV">
    <property type="method" value="X-ray"/>
    <property type="resolution" value="1.80 A"/>
    <property type="chains" value="B=1-241"/>
</dbReference>
<dbReference type="PDB" id="2BUW">
    <property type="method" value="X-ray"/>
    <property type="resolution" value="1.80 A"/>
    <property type="chains" value="B=1-241"/>
</dbReference>
<dbReference type="PDB" id="2BUX">
    <property type="method" value="X-ray"/>
    <property type="resolution" value="1.80 A"/>
    <property type="chains" value="B=1-241"/>
</dbReference>
<dbReference type="PDB" id="2BUY">
    <property type="method" value="X-ray"/>
    <property type="resolution" value="1.80 A"/>
    <property type="chains" value="B=1-241"/>
</dbReference>
<dbReference type="PDB" id="2BUZ">
    <property type="method" value="X-ray"/>
    <property type="resolution" value="1.80 A"/>
    <property type="chains" value="B=1-241"/>
</dbReference>
<dbReference type="PDB" id="2BV0">
    <property type="method" value="X-ray"/>
    <property type="resolution" value="1.80 A"/>
    <property type="chains" value="B=1-241"/>
</dbReference>
<dbReference type="PDBsum" id="1EO2"/>
<dbReference type="PDBsum" id="1EO9"/>
<dbReference type="PDBsum" id="1EOA"/>
<dbReference type="PDBsum" id="1EOB"/>
<dbReference type="PDBsum" id="1EOC"/>
<dbReference type="PDBsum" id="2BUM"/>
<dbReference type="PDBsum" id="2BUQ"/>
<dbReference type="PDBsum" id="2BUR"/>
<dbReference type="PDBsum" id="2BUT"/>
<dbReference type="PDBsum" id="2BUU"/>
<dbReference type="PDBsum" id="2BUV"/>
<dbReference type="PDBsum" id="2BUW"/>
<dbReference type="PDBsum" id="2BUX"/>
<dbReference type="PDBsum" id="2BUY"/>
<dbReference type="PDBsum" id="2BUZ"/>
<dbReference type="PDBsum" id="2BV0"/>
<dbReference type="SMR" id="P20372"/>
<dbReference type="IntAct" id="P20372">
    <property type="interactions" value="1"/>
</dbReference>
<dbReference type="STRING" id="202950.GCA_001485005_03089"/>
<dbReference type="GeneID" id="45234098"/>
<dbReference type="KEGG" id="aci:ACIAD1711"/>
<dbReference type="eggNOG" id="COG3485">
    <property type="taxonomic scope" value="Bacteria"/>
</dbReference>
<dbReference type="HOGENOM" id="CLU_027719_5_0_6"/>
<dbReference type="OrthoDB" id="9805815at2"/>
<dbReference type="BioCyc" id="ASP62977:ACIAD_RS07885-MONOMER"/>
<dbReference type="UniPathway" id="UPA00157">
    <property type="reaction ID" value="UER00264"/>
</dbReference>
<dbReference type="EvolutionaryTrace" id="P20372"/>
<dbReference type="PRO" id="PR:P20372"/>
<dbReference type="Proteomes" id="UP000000430">
    <property type="component" value="Chromosome"/>
</dbReference>
<dbReference type="GO" id="GO:0008199">
    <property type="term" value="F:ferric iron binding"/>
    <property type="evidence" value="ECO:0007669"/>
    <property type="project" value="InterPro"/>
</dbReference>
<dbReference type="GO" id="GO:0018578">
    <property type="term" value="F:protocatechuate 3,4-dioxygenase activity"/>
    <property type="evidence" value="ECO:0007669"/>
    <property type="project" value="UniProtKB-EC"/>
</dbReference>
<dbReference type="GO" id="GO:0019619">
    <property type="term" value="P:3,4-dihydroxybenzoate catabolic process"/>
    <property type="evidence" value="ECO:0007669"/>
    <property type="project" value="InterPro"/>
</dbReference>
<dbReference type="GO" id="GO:0042952">
    <property type="term" value="P:beta-ketoadipate pathway"/>
    <property type="evidence" value="ECO:0007669"/>
    <property type="project" value="UniProtKB-UniPathway"/>
</dbReference>
<dbReference type="CDD" id="cd03464">
    <property type="entry name" value="3_4-PCD_beta"/>
    <property type="match status" value="1"/>
</dbReference>
<dbReference type="Gene3D" id="2.60.130.10">
    <property type="entry name" value="Aromatic compound dioxygenase"/>
    <property type="match status" value="1"/>
</dbReference>
<dbReference type="InterPro" id="IPR000627">
    <property type="entry name" value="Intradiol_dOase_C"/>
</dbReference>
<dbReference type="InterPro" id="IPR015889">
    <property type="entry name" value="Intradiol_dOase_core"/>
</dbReference>
<dbReference type="InterPro" id="IPR050770">
    <property type="entry name" value="Intradiol_RC_Dioxygenase"/>
</dbReference>
<dbReference type="InterPro" id="IPR024756">
    <property type="entry name" value="PCDO_beta_N"/>
</dbReference>
<dbReference type="InterPro" id="IPR012785">
    <property type="entry name" value="Protocat_dOase_b"/>
</dbReference>
<dbReference type="NCBIfam" id="TIGR02422">
    <property type="entry name" value="protocat_beta"/>
    <property type="match status" value="1"/>
</dbReference>
<dbReference type="PANTHER" id="PTHR33711">
    <property type="entry name" value="DIOXYGENASE, PUTATIVE (AFU_ORTHOLOGUE AFUA_2G02910)-RELATED"/>
    <property type="match status" value="1"/>
</dbReference>
<dbReference type="PANTHER" id="PTHR33711:SF10">
    <property type="entry name" value="INTRADIOL RING-CLEAVAGE DIOXYGENASES DOMAIN-CONTAINING PROTEIN"/>
    <property type="match status" value="1"/>
</dbReference>
<dbReference type="Pfam" id="PF00775">
    <property type="entry name" value="Dioxygenase_C"/>
    <property type="match status" value="1"/>
</dbReference>
<dbReference type="Pfam" id="PF12391">
    <property type="entry name" value="PCDO_beta_N"/>
    <property type="match status" value="1"/>
</dbReference>
<dbReference type="SUPFAM" id="SSF49482">
    <property type="entry name" value="Aromatic compound dioxygenase"/>
    <property type="match status" value="1"/>
</dbReference>
<dbReference type="PROSITE" id="PS00083">
    <property type="entry name" value="INTRADIOL_DIOXYGENAS"/>
    <property type="match status" value="1"/>
</dbReference>
<evidence type="ECO:0000250" key="1"/>
<evidence type="ECO:0000305" key="2"/>
<evidence type="ECO:0007829" key="3">
    <source>
        <dbReference type="PDB" id="2BUM"/>
    </source>
</evidence>
<protein>
    <recommendedName>
        <fullName>Protocatechuate 3,4-dioxygenase beta chain</fullName>
        <ecNumber>1.13.11.3</ecNumber>
    </recommendedName>
    <alternativeName>
        <fullName>3,4-PCD</fullName>
    </alternativeName>
</protein>
<proteinExistence type="evidence at protein level"/>
<accession>P20372</accession>
<accession>Q43976</accession>
<organism>
    <name type="scientific">Acinetobacter baylyi (strain ATCC 33305 / BD413 / ADP1)</name>
    <dbReference type="NCBI Taxonomy" id="62977"/>
    <lineage>
        <taxon>Bacteria</taxon>
        <taxon>Pseudomonadati</taxon>
        <taxon>Pseudomonadota</taxon>
        <taxon>Gammaproteobacteria</taxon>
        <taxon>Moraxellales</taxon>
        <taxon>Moraxellaceae</taxon>
        <taxon>Acinetobacter</taxon>
    </lineage>
</organism>